<feature type="chain" id="PRO_0000244555" description="UPF0370 protein YPO3055/y1425/YP_2677">
    <location>
        <begin position="1"/>
        <end position="64"/>
    </location>
</feature>
<feature type="transmembrane region" description="Helical" evidence="1">
    <location>
        <begin position="3"/>
        <end position="23"/>
    </location>
</feature>
<feature type="region of interest" description="Disordered" evidence="2">
    <location>
        <begin position="36"/>
        <end position="64"/>
    </location>
</feature>
<feature type="compositionally biased region" description="Basic and acidic residues" evidence="2">
    <location>
        <begin position="36"/>
        <end position="47"/>
    </location>
</feature>
<evidence type="ECO:0000255" key="1">
    <source>
        <dbReference type="HAMAP-Rule" id="MF_01566"/>
    </source>
</evidence>
<evidence type="ECO:0000256" key="2">
    <source>
        <dbReference type="SAM" id="MobiDB-lite"/>
    </source>
</evidence>
<evidence type="ECO:0000305" key="3"/>
<reference key="1">
    <citation type="journal article" date="2001" name="Nature">
        <title>Genome sequence of Yersinia pestis, the causative agent of plague.</title>
        <authorList>
            <person name="Parkhill J."/>
            <person name="Wren B.W."/>
            <person name="Thomson N.R."/>
            <person name="Titball R.W."/>
            <person name="Holden M.T.G."/>
            <person name="Prentice M.B."/>
            <person name="Sebaihia M."/>
            <person name="James K.D."/>
            <person name="Churcher C.M."/>
            <person name="Mungall K.L."/>
            <person name="Baker S."/>
            <person name="Basham D."/>
            <person name="Bentley S.D."/>
            <person name="Brooks K."/>
            <person name="Cerdeno-Tarraga A.-M."/>
            <person name="Chillingworth T."/>
            <person name="Cronin A."/>
            <person name="Davies R.M."/>
            <person name="Davis P."/>
            <person name="Dougan G."/>
            <person name="Feltwell T."/>
            <person name="Hamlin N."/>
            <person name="Holroyd S."/>
            <person name="Jagels K."/>
            <person name="Karlyshev A.V."/>
            <person name="Leather S."/>
            <person name="Moule S."/>
            <person name="Oyston P.C.F."/>
            <person name="Quail M.A."/>
            <person name="Rutherford K.M."/>
            <person name="Simmonds M."/>
            <person name="Skelton J."/>
            <person name="Stevens K."/>
            <person name="Whitehead S."/>
            <person name="Barrell B.G."/>
        </authorList>
    </citation>
    <scope>NUCLEOTIDE SEQUENCE [LARGE SCALE GENOMIC DNA]</scope>
    <source>
        <strain>CO-92 / Biovar Orientalis</strain>
    </source>
</reference>
<reference key="2">
    <citation type="journal article" date="2002" name="J. Bacteriol.">
        <title>Genome sequence of Yersinia pestis KIM.</title>
        <authorList>
            <person name="Deng W."/>
            <person name="Burland V."/>
            <person name="Plunkett G. III"/>
            <person name="Boutin A."/>
            <person name="Mayhew G.F."/>
            <person name="Liss P."/>
            <person name="Perna N.T."/>
            <person name="Rose D.J."/>
            <person name="Mau B."/>
            <person name="Zhou S."/>
            <person name="Schwartz D.C."/>
            <person name="Fetherston J.D."/>
            <person name="Lindler L.E."/>
            <person name="Brubaker R.R."/>
            <person name="Plano G.V."/>
            <person name="Straley S.C."/>
            <person name="McDonough K.A."/>
            <person name="Nilles M.L."/>
            <person name="Matson J.S."/>
            <person name="Blattner F.R."/>
            <person name="Perry R.D."/>
        </authorList>
    </citation>
    <scope>NUCLEOTIDE SEQUENCE [LARGE SCALE GENOMIC DNA]</scope>
    <source>
        <strain>KIM10+ / Biovar Mediaevalis</strain>
    </source>
</reference>
<reference key="3">
    <citation type="journal article" date="2004" name="DNA Res.">
        <title>Complete genome sequence of Yersinia pestis strain 91001, an isolate avirulent to humans.</title>
        <authorList>
            <person name="Song Y."/>
            <person name="Tong Z."/>
            <person name="Wang J."/>
            <person name="Wang L."/>
            <person name="Guo Z."/>
            <person name="Han Y."/>
            <person name="Zhang J."/>
            <person name="Pei D."/>
            <person name="Zhou D."/>
            <person name="Qin H."/>
            <person name="Pang X."/>
            <person name="Han Y."/>
            <person name="Zhai J."/>
            <person name="Li M."/>
            <person name="Cui B."/>
            <person name="Qi Z."/>
            <person name="Jin L."/>
            <person name="Dai R."/>
            <person name="Chen F."/>
            <person name="Li S."/>
            <person name="Ye C."/>
            <person name="Du Z."/>
            <person name="Lin W."/>
            <person name="Wang J."/>
            <person name="Yu J."/>
            <person name="Yang H."/>
            <person name="Wang J."/>
            <person name="Huang P."/>
            <person name="Yang R."/>
        </authorList>
    </citation>
    <scope>NUCLEOTIDE SEQUENCE [LARGE SCALE GENOMIC DNA]</scope>
    <source>
        <strain>91001 / Biovar Mediaevalis</strain>
    </source>
</reference>
<dbReference type="EMBL" id="AL590842">
    <property type="protein sequence ID" value="CAL21657.1"/>
    <property type="molecule type" value="Genomic_DNA"/>
</dbReference>
<dbReference type="EMBL" id="AE009952">
    <property type="protein sequence ID" value="AAM84997.1"/>
    <property type="status" value="ALT_INIT"/>
    <property type="molecule type" value="Genomic_DNA"/>
</dbReference>
<dbReference type="EMBL" id="AE017042">
    <property type="protein sequence ID" value="AAS62867.1"/>
    <property type="status" value="ALT_INIT"/>
    <property type="molecule type" value="Genomic_DNA"/>
</dbReference>
<dbReference type="PIR" id="AF0371">
    <property type="entry name" value="AF0371"/>
</dbReference>
<dbReference type="RefSeq" id="WP_002208551.1">
    <property type="nucleotide sequence ID" value="NZ_WUCM01000010.1"/>
</dbReference>
<dbReference type="RefSeq" id="YP_002347975.1">
    <property type="nucleotide sequence ID" value="NC_003143.1"/>
</dbReference>
<dbReference type="SMR" id="Q8ZCD6"/>
<dbReference type="STRING" id="214092.YPO3055"/>
<dbReference type="PaxDb" id="214092-YPO3055"/>
<dbReference type="EnsemblBacteria" id="AAS62867">
    <property type="protein sequence ID" value="AAS62867"/>
    <property type="gene ID" value="YP_2677"/>
</dbReference>
<dbReference type="KEGG" id="ype:YPO3055"/>
<dbReference type="KEGG" id="ypk:y1425"/>
<dbReference type="KEGG" id="ypm:YP_2677"/>
<dbReference type="PATRIC" id="fig|214092.21.peg.3511"/>
<dbReference type="eggNOG" id="ENOG5032YJI">
    <property type="taxonomic scope" value="Bacteria"/>
</dbReference>
<dbReference type="HOGENOM" id="CLU_198936_0_0_6"/>
<dbReference type="OMA" id="DDWPQKK"/>
<dbReference type="OrthoDB" id="6522148at2"/>
<dbReference type="Proteomes" id="UP000000815">
    <property type="component" value="Chromosome"/>
</dbReference>
<dbReference type="Proteomes" id="UP000001019">
    <property type="component" value="Chromosome"/>
</dbReference>
<dbReference type="Proteomes" id="UP000002490">
    <property type="component" value="Chromosome"/>
</dbReference>
<dbReference type="GO" id="GO:0005886">
    <property type="term" value="C:plasma membrane"/>
    <property type="evidence" value="ECO:0007669"/>
    <property type="project" value="UniProtKB-SubCell"/>
</dbReference>
<dbReference type="HAMAP" id="MF_01566">
    <property type="entry name" value="UPF0370"/>
    <property type="match status" value="1"/>
</dbReference>
<dbReference type="InterPro" id="IPR020910">
    <property type="entry name" value="UPF0370"/>
</dbReference>
<dbReference type="NCBIfam" id="NF010185">
    <property type="entry name" value="PRK13664.1"/>
    <property type="match status" value="1"/>
</dbReference>
<dbReference type="Pfam" id="PF13980">
    <property type="entry name" value="UPF0370"/>
    <property type="match status" value="1"/>
</dbReference>
<accession>Q8ZCD6</accession>
<accession>Q0WCL3</accession>
<accession>Q74SD7</accession>
<accession>Q8CLG1</accession>
<gene>
    <name type="ordered locus">YPO3055</name>
    <name type="ordered locus">y1425</name>
    <name type="ordered locus">YP_2677</name>
</gene>
<keyword id="KW-1003">Cell membrane</keyword>
<keyword id="KW-0472">Membrane</keyword>
<keyword id="KW-1185">Reference proteome</keyword>
<keyword id="KW-0812">Transmembrane</keyword>
<keyword id="KW-1133">Transmembrane helix</keyword>
<proteinExistence type="inferred from homology"/>
<sequence length="64" mass="7896">MQWLADYWWIILILLVGMILNGIKELRRLDHKRFLDNKPELPPHRDNNAQWDDEDDWPDQNKKK</sequence>
<protein>
    <recommendedName>
        <fullName evidence="1">UPF0370 protein YPO3055/y1425/YP_2677</fullName>
    </recommendedName>
</protein>
<comment type="subcellular location">
    <subcellularLocation>
        <location evidence="1">Cell membrane</location>
        <topology evidence="1">Single-pass membrane protein</topology>
    </subcellularLocation>
</comment>
<comment type="similarity">
    <text evidence="1">Belongs to the UPF0370 family.</text>
</comment>
<comment type="sequence caution" evidence="3">
    <conflict type="erroneous initiation">
        <sequence resource="EMBL-CDS" id="AAM84997"/>
    </conflict>
</comment>
<comment type="sequence caution" evidence="3">
    <conflict type="erroneous initiation">
        <sequence resource="EMBL-CDS" id="AAS62867"/>
    </conflict>
</comment>
<name>Y3055_YERPE</name>
<organism>
    <name type="scientific">Yersinia pestis</name>
    <dbReference type="NCBI Taxonomy" id="632"/>
    <lineage>
        <taxon>Bacteria</taxon>
        <taxon>Pseudomonadati</taxon>
        <taxon>Pseudomonadota</taxon>
        <taxon>Gammaproteobacteria</taxon>
        <taxon>Enterobacterales</taxon>
        <taxon>Yersiniaceae</taxon>
        <taxon>Yersinia</taxon>
    </lineage>
</organism>